<dbReference type="EMBL" id="AE017285">
    <property type="protein sequence ID" value="AAS95291.1"/>
    <property type="molecule type" value="Genomic_DNA"/>
</dbReference>
<dbReference type="RefSeq" id="WP_010938112.1">
    <property type="nucleotide sequence ID" value="NC_002937.3"/>
</dbReference>
<dbReference type="RefSeq" id="YP_010032.1">
    <property type="nucleotide sequence ID" value="NC_002937.3"/>
</dbReference>
<dbReference type="SMR" id="Q72DW8"/>
<dbReference type="STRING" id="882.DVU_0811"/>
<dbReference type="PaxDb" id="882-DVU_0811"/>
<dbReference type="EnsemblBacteria" id="AAS95291">
    <property type="protein sequence ID" value="AAS95291"/>
    <property type="gene ID" value="DVU_0811"/>
</dbReference>
<dbReference type="KEGG" id="dvu:DVU_0811"/>
<dbReference type="PATRIC" id="fig|882.5.peg.760"/>
<dbReference type="eggNOG" id="COG0443">
    <property type="taxonomic scope" value="Bacteria"/>
</dbReference>
<dbReference type="HOGENOM" id="CLU_005965_2_1_7"/>
<dbReference type="OrthoDB" id="9766019at2"/>
<dbReference type="PhylomeDB" id="Q72DW8"/>
<dbReference type="Proteomes" id="UP000002194">
    <property type="component" value="Chromosome"/>
</dbReference>
<dbReference type="GO" id="GO:0005524">
    <property type="term" value="F:ATP binding"/>
    <property type="evidence" value="ECO:0007669"/>
    <property type="project" value="UniProtKB-UniRule"/>
</dbReference>
<dbReference type="GO" id="GO:0140662">
    <property type="term" value="F:ATP-dependent protein folding chaperone"/>
    <property type="evidence" value="ECO:0007669"/>
    <property type="project" value="InterPro"/>
</dbReference>
<dbReference type="GO" id="GO:0051082">
    <property type="term" value="F:unfolded protein binding"/>
    <property type="evidence" value="ECO:0007669"/>
    <property type="project" value="InterPro"/>
</dbReference>
<dbReference type="CDD" id="cd10234">
    <property type="entry name" value="ASKHA_NBD_HSP70_DnaK-like"/>
    <property type="match status" value="1"/>
</dbReference>
<dbReference type="FunFam" id="2.60.34.10:FF:000014">
    <property type="entry name" value="Chaperone protein DnaK HSP70"/>
    <property type="match status" value="1"/>
</dbReference>
<dbReference type="FunFam" id="3.30.30.30:FF:000005">
    <property type="entry name" value="Heat shock protein ssb1"/>
    <property type="match status" value="1"/>
</dbReference>
<dbReference type="FunFam" id="1.20.1270.10:FF:000001">
    <property type="entry name" value="Molecular chaperone DnaK"/>
    <property type="match status" value="1"/>
</dbReference>
<dbReference type="FunFam" id="3.30.420.40:FF:000004">
    <property type="entry name" value="Molecular chaperone DnaK"/>
    <property type="match status" value="1"/>
</dbReference>
<dbReference type="FunFam" id="3.90.640.10:FF:000003">
    <property type="entry name" value="Molecular chaperone DnaK"/>
    <property type="match status" value="1"/>
</dbReference>
<dbReference type="Gene3D" id="1.20.1270.10">
    <property type="match status" value="1"/>
</dbReference>
<dbReference type="Gene3D" id="3.30.420.40">
    <property type="match status" value="2"/>
</dbReference>
<dbReference type="Gene3D" id="3.90.640.10">
    <property type="entry name" value="Actin, Chain A, domain 4"/>
    <property type="match status" value="1"/>
</dbReference>
<dbReference type="Gene3D" id="2.60.34.10">
    <property type="entry name" value="Substrate Binding Domain Of DNAk, Chain A, domain 1"/>
    <property type="match status" value="1"/>
</dbReference>
<dbReference type="HAMAP" id="MF_00332">
    <property type="entry name" value="DnaK"/>
    <property type="match status" value="1"/>
</dbReference>
<dbReference type="InterPro" id="IPR043129">
    <property type="entry name" value="ATPase_NBD"/>
</dbReference>
<dbReference type="InterPro" id="IPR012725">
    <property type="entry name" value="Chaperone_DnaK"/>
</dbReference>
<dbReference type="InterPro" id="IPR018181">
    <property type="entry name" value="Heat_shock_70_CS"/>
</dbReference>
<dbReference type="InterPro" id="IPR029048">
    <property type="entry name" value="HSP70_C_sf"/>
</dbReference>
<dbReference type="InterPro" id="IPR029047">
    <property type="entry name" value="HSP70_peptide-bd_sf"/>
</dbReference>
<dbReference type="InterPro" id="IPR013126">
    <property type="entry name" value="Hsp_70_fam"/>
</dbReference>
<dbReference type="NCBIfam" id="NF001413">
    <property type="entry name" value="PRK00290.1"/>
    <property type="match status" value="1"/>
</dbReference>
<dbReference type="NCBIfam" id="NF003520">
    <property type="entry name" value="PRK05183.1"/>
    <property type="match status" value="1"/>
</dbReference>
<dbReference type="NCBIfam" id="TIGR02350">
    <property type="entry name" value="prok_dnaK"/>
    <property type="match status" value="1"/>
</dbReference>
<dbReference type="PANTHER" id="PTHR19375">
    <property type="entry name" value="HEAT SHOCK PROTEIN 70KDA"/>
    <property type="match status" value="1"/>
</dbReference>
<dbReference type="Pfam" id="PF00012">
    <property type="entry name" value="HSP70"/>
    <property type="match status" value="1"/>
</dbReference>
<dbReference type="PRINTS" id="PR00301">
    <property type="entry name" value="HEATSHOCK70"/>
</dbReference>
<dbReference type="SUPFAM" id="SSF53067">
    <property type="entry name" value="Actin-like ATPase domain"/>
    <property type="match status" value="2"/>
</dbReference>
<dbReference type="SUPFAM" id="SSF100934">
    <property type="entry name" value="Heat shock protein 70kD (HSP70), C-terminal subdomain"/>
    <property type="match status" value="1"/>
</dbReference>
<dbReference type="SUPFAM" id="SSF100920">
    <property type="entry name" value="Heat shock protein 70kD (HSP70), peptide-binding domain"/>
    <property type="match status" value="1"/>
</dbReference>
<dbReference type="PROSITE" id="PS00297">
    <property type="entry name" value="HSP70_1"/>
    <property type="match status" value="1"/>
</dbReference>
<dbReference type="PROSITE" id="PS00329">
    <property type="entry name" value="HSP70_2"/>
    <property type="match status" value="1"/>
</dbReference>
<dbReference type="PROSITE" id="PS01036">
    <property type="entry name" value="HSP70_3"/>
    <property type="match status" value="1"/>
</dbReference>
<organism>
    <name type="scientific">Nitratidesulfovibrio vulgaris (strain ATCC 29579 / DSM 644 / CCUG 34227 / NCIMB 8303 / VKM B-1760 / Hildenborough)</name>
    <name type="common">Desulfovibrio vulgaris</name>
    <dbReference type="NCBI Taxonomy" id="882"/>
    <lineage>
        <taxon>Bacteria</taxon>
        <taxon>Pseudomonadati</taxon>
        <taxon>Thermodesulfobacteriota</taxon>
        <taxon>Desulfovibrionia</taxon>
        <taxon>Desulfovibrionales</taxon>
        <taxon>Desulfovibrionaceae</taxon>
        <taxon>Nitratidesulfovibrio</taxon>
    </lineage>
</organism>
<feature type="chain" id="PRO_0000225960" description="Chaperone protein DnaK">
    <location>
        <begin position="1"/>
        <end position="636"/>
    </location>
</feature>
<feature type="region of interest" description="Disordered" evidence="2">
    <location>
        <begin position="597"/>
        <end position="636"/>
    </location>
</feature>
<feature type="compositionally biased region" description="Low complexity" evidence="2">
    <location>
        <begin position="600"/>
        <end position="616"/>
    </location>
</feature>
<feature type="compositionally biased region" description="Acidic residues" evidence="2">
    <location>
        <begin position="625"/>
        <end position="636"/>
    </location>
</feature>
<feature type="modified residue" description="Phosphothreonine; by autocatalysis" evidence="1">
    <location>
        <position position="197"/>
    </location>
</feature>
<proteinExistence type="inferred from homology"/>
<protein>
    <recommendedName>
        <fullName evidence="1">Chaperone protein DnaK</fullName>
    </recommendedName>
    <alternativeName>
        <fullName evidence="1">HSP70</fullName>
    </alternativeName>
    <alternativeName>
        <fullName evidence="1">Heat shock 70 kDa protein</fullName>
    </alternativeName>
    <alternativeName>
        <fullName evidence="1">Heat shock protein 70</fullName>
    </alternativeName>
</protein>
<name>DNAK_NITV2</name>
<keyword id="KW-0067">ATP-binding</keyword>
<keyword id="KW-0143">Chaperone</keyword>
<keyword id="KW-0547">Nucleotide-binding</keyword>
<keyword id="KW-0597">Phosphoprotein</keyword>
<keyword id="KW-1185">Reference proteome</keyword>
<keyword id="KW-0346">Stress response</keyword>
<reference key="1">
    <citation type="journal article" date="2004" name="Nat. Biotechnol.">
        <title>The genome sequence of the anaerobic, sulfate-reducing bacterium Desulfovibrio vulgaris Hildenborough.</title>
        <authorList>
            <person name="Heidelberg J.F."/>
            <person name="Seshadri R."/>
            <person name="Haveman S.A."/>
            <person name="Hemme C.L."/>
            <person name="Paulsen I.T."/>
            <person name="Kolonay J.F."/>
            <person name="Eisen J.A."/>
            <person name="Ward N.L."/>
            <person name="Methe B.A."/>
            <person name="Brinkac L.M."/>
            <person name="Daugherty S.C."/>
            <person name="DeBoy R.T."/>
            <person name="Dodson R.J."/>
            <person name="Durkin A.S."/>
            <person name="Madupu R."/>
            <person name="Nelson W.C."/>
            <person name="Sullivan S.A."/>
            <person name="Fouts D.E."/>
            <person name="Haft D.H."/>
            <person name="Selengut J."/>
            <person name="Peterson J.D."/>
            <person name="Davidsen T.M."/>
            <person name="Zafar N."/>
            <person name="Zhou L."/>
            <person name="Radune D."/>
            <person name="Dimitrov G."/>
            <person name="Hance M."/>
            <person name="Tran K."/>
            <person name="Khouri H.M."/>
            <person name="Gill J."/>
            <person name="Utterback T.R."/>
            <person name="Feldblyum T.V."/>
            <person name="Wall J.D."/>
            <person name="Voordouw G."/>
            <person name="Fraser C.M."/>
        </authorList>
    </citation>
    <scope>NUCLEOTIDE SEQUENCE [LARGE SCALE GENOMIC DNA]</scope>
    <source>
        <strain>ATCC 29579 / DSM 644 / CCUG 34227 / NCIMB 8303 / VKM B-1760 / Hildenborough</strain>
    </source>
</reference>
<sequence>MGKIIGIDLGTTNSCVYVMEGKDPKCITNPEGGRTTPSVVAFTDKERLVGDIAKRQAVTNPERTVFAVKRLMGRRGDAPEVGRWKEHSPYRIVAGANGDAAVEVQGRPYSAPEISAMILGKLKADAEAYLGETVTEAVITVPAYFNDAQRQATKDAGRIAGLDVKRIINEPTAASLAYGFDRKANEKIAVFDLGGGTFDISILEVGDNVVEVRATNGDTFLGGEDFDQRIISYLVDEFRRENGGIDLARDRMALQRLKEAAEKAKKDLSTSMETEVNLPFITADQTGPKHLMMKLSRAKLEKLVEDLVERTVEPCRKALADAGLTAAQIDEVVLVGGMTRMPLVQKRVSEFFGKEPNRSVNPDEVVAMGAAIQGGILAGDVKDVLLLDVTPLSLGIETLGGVFTRLIERNTTIPTRKSQTFTTAADNQPSVSIHVLQGERPMASDNMTLGRFELTGIPPAMRGVPQIEVSFDIDANGIVNVAAKDLGTGKEQSIRITASSGLSEDEIQRLVKEAEAHADDDKKKQELIEARNQADGLIYGTEKSIRDLGDKLDAALKADIETKVTALRGLLESEDVDAIKKASDELAQASHKLAEQLYKQQAQAGGPEAGAQPEGDAGARKQDDDVVDADYTEVKK</sequence>
<accession>Q72DW8</accession>
<comment type="function">
    <text evidence="1">Acts as a chaperone.</text>
</comment>
<comment type="induction">
    <text evidence="1">By stress conditions e.g. heat shock.</text>
</comment>
<comment type="similarity">
    <text evidence="1">Belongs to the heat shock protein 70 family.</text>
</comment>
<gene>
    <name evidence="1" type="primary">dnaK</name>
    <name type="ordered locus">DVU_0811</name>
</gene>
<evidence type="ECO:0000255" key="1">
    <source>
        <dbReference type="HAMAP-Rule" id="MF_00332"/>
    </source>
</evidence>
<evidence type="ECO:0000256" key="2">
    <source>
        <dbReference type="SAM" id="MobiDB-lite"/>
    </source>
</evidence>